<protein>
    <recommendedName>
        <fullName evidence="1">Shikimate dehydrogenase (NADP(+))</fullName>
        <shortName evidence="1">SDH</shortName>
        <ecNumber evidence="1">1.1.1.25</ecNumber>
    </recommendedName>
</protein>
<gene>
    <name evidence="1" type="primary">aroE</name>
    <name type="ordered locus">RALTA_A2636</name>
</gene>
<sequence length="295" mass="31529">MTSTDPSQASADRYVVIGNPVAHSRSPSIHAAFARQTGEAVHYDRLEAPLDGFADTVRRFFADGGYGCNVTVPFKLEAYDLADRLTERAEAAGAVNTLWIEEGLIHGDNTDGIGLVRDIQDNLDTLIEGKRVLLLGAGGAAMGAMLPLIECRPSRIVVANRTASRASDMLEAFVEAADQYGVELWGGGLDALEGLSEDEAVDVVINASSSSLQGEVPPVPEFLLGEGVLAYDMMYGAEPTVFLQFAARCGARVSDGLGMLVEQAAEAFYIWRGVRPRTAPVLAELRAALQAERKV</sequence>
<comment type="function">
    <text evidence="1">Involved in the biosynthesis of the chorismate, which leads to the biosynthesis of aromatic amino acids. Catalyzes the reversible NADPH linked reduction of 3-dehydroshikimate (DHSA) to yield shikimate (SA).</text>
</comment>
<comment type="catalytic activity">
    <reaction evidence="1">
        <text>shikimate + NADP(+) = 3-dehydroshikimate + NADPH + H(+)</text>
        <dbReference type="Rhea" id="RHEA:17737"/>
        <dbReference type="ChEBI" id="CHEBI:15378"/>
        <dbReference type="ChEBI" id="CHEBI:16630"/>
        <dbReference type="ChEBI" id="CHEBI:36208"/>
        <dbReference type="ChEBI" id="CHEBI:57783"/>
        <dbReference type="ChEBI" id="CHEBI:58349"/>
        <dbReference type="EC" id="1.1.1.25"/>
    </reaction>
</comment>
<comment type="pathway">
    <text evidence="1">Metabolic intermediate biosynthesis; chorismate biosynthesis; chorismate from D-erythrose 4-phosphate and phosphoenolpyruvate: step 4/7.</text>
</comment>
<comment type="subunit">
    <text evidence="1">Homodimer.</text>
</comment>
<comment type="similarity">
    <text evidence="1">Belongs to the shikimate dehydrogenase family.</text>
</comment>
<reference key="1">
    <citation type="journal article" date="2008" name="Genome Res.">
        <title>Genome sequence of the beta-rhizobium Cupriavidus taiwanensis and comparative genomics of rhizobia.</title>
        <authorList>
            <person name="Amadou C."/>
            <person name="Pascal G."/>
            <person name="Mangenot S."/>
            <person name="Glew M."/>
            <person name="Bontemps C."/>
            <person name="Capela D."/>
            <person name="Carrere S."/>
            <person name="Cruveiller S."/>
            <person name="Dossat C."/>
            <person name="Lajus A."/>
            <person name="Marchetti M."/>
            <person name="Poinsot V."/>
            <person name="Rouy Z."/>
            <person name="Servin B."/>
            <person name="Saad M."/>
            <person name="Schenowitz C."/>
            <person name="Barbe V."/>
            <person name="Batut J."/>
            <person name="Medigue C."/>
            <person name="Masson-Boivin C."/>
        </authorList>
    </citation>
    <scope>NUCLEOTIDE SEQUENCE [LARGE SCALE GENOMIC DNA]</scope>
    <source>
        <strain>DSM 17343 / BCRC 17206 / CCUG 44338 / CIP 107171 / LMG 19424 / R1</strain>
    </source>
</reference>
<feature type="chain" id="PRO_1000100112" description="Shikimate dehydrogenase (NADP(+))">
    <location>
        <begin position="1"/>
        <end position="295"/>
    </location>
</feature>
<feature type="active site" description="Proton acceptor" evidence="1">
    <location>
        <position position="75"/>
    </location>
</feature>
<feature type="binding site" evidence="1">
    <location>
        <begin position="24"/>
        <end position="26"/>
    </location>
    <ligand>
        <name>shikimate</name>
        <dbReference type="ChEBI" id="CHEBI:36208"/>
    </ligand>
</feature>
<feature type="binding site" evidence="1">
    <location>
        <position position="71"/>
    </location>
    <ligand>
        <name>shikimate</name>
        <dbReference type="ChEBI" id="CHEBI:36208"/>
    </ligand>
</feature>
<feature type="binding site" evidence="1">
    <location>
        <position position="87"/>
    </location>
    <ligand>
        <name>NADP(+)</name>
        <dbReference type="ChEBI" id="CHEBI:58349"/>
    </ligand>
</feature>
<feature type="binding site" evidence="1">
    <location>
        <position position="96"/>
    </location>
    <ligand>
        <name>shikimate</name>
        <dbReference type="ChEBI" id="CHEBI:36208"/>
    </ligand>
</feature>
<feature type="binding site" evidence="1">
    <location>
        <position position="111"/>
    </location>
    <ligand>
        <name>shikimate</name>
        <dbReference type="ChEBI" id="CHEBI:36208"/>
    </ligand>
</feature>
<feature type="binding site" evidence="1">
    <location>
        <begin position="136"/>
        <end position="140"/>
    </location>
    <ligand>
        <name>NADP(+)</name>
        <dbReference type="ChEBI" id="CHEBI:58349"/>
    </ligand>
</feature>
<feature type="binding site" evidence="1">
    <location>
        <begin position="160"/>
        <end position="165"/>
    </location>
    <ligand>
        <name>NADP(+)</name>
        <dbReference type="ChEBI" id="CHEBI:58349"/>
    </ligand>
</feature>
<feature type="binding site" evidence="1">
    <location>
        <position position="233"/>
    </location>
    <ligand>
        <name>NADP(+)</name>
        <dbReference type="ChEBI" id="CHEBI:58349"/>
    </ligand>
</feature>
<feature type="binding site" evidence="1">
    <location>
        <position position="235"/>
    </location>
    <ligand>
        <name>shikimate</name>
        <dbReference type="ChEBI" id="CHEBI:36208"/>
    </ligand>
</feature>
<feature type="binding site" evidence="1">
    <location>
        <position position="256"/>
    </location>
    <ligand>
        <name>NADP(+)</name>
        <dbReference type="ChEBI" id="CHEBI:58349"/>
    </ligand>
</feature>
<keyword id="KW-0028">Amino-acid biosynthesis</keyword>
<keyword id="KW-0057">Aromatic amino acid biosynthesis</keyword>
<keyword id="KW-0521">NADP</keyword>
<keyword id="KW-0560">Oxidoreductase</keyword>
<organism>
    <name type="scientific">Cupriavidus taiwanensis (strain DSM 17343 / BCRC 17206 / CCUG 44338 / CIP 107171 / LMG 19424 / R1)</name>
    <name type="common">Ralstonia taiwanensis (strain LMG 19424)</name>
    <dbReference type="NCBI Taxonomy" id="977880"/>
    <lineage>
        <taxon>Bacteria</taxon>
        <taxon>Pseudomonadati</taxon>
        <taxon>Pseudomonadota</taxon>
        <taxon>Betaproteobacteria</taxon>
        <taxon>Burkholderiales</taxon>
        <taxon>Burkholderiaceae</taxon>
        <taxon>Cupriavidus</taxon>
    </lineage>
</organism>
<dbReference type="EC" id="1.1.1.25" evidence="1"/>
<dbReference type="EMBL" id="CU633749">
    <property type="protein sequence ID" value="CAQ70567.1"/>
    <property type="molecule type" value="Genomic_DNA"/>
</dbReference>
<dbReference type="RefSeq" id="WP_012353863.1">
    <property type="nucleotide sequence ID" value="NC_010528.1"/>
</dbReference>
<dbReference type="SMR" id="B3R6S4"/>
<dbReference type="GeneID" id="29760844"/>
<dbReference type="KEGG" id="cti:RALTA_A2636"/>
<dbReference type="eggNOG" id="COG0169">
    <property type="taxonomic scope" value="Bacteria"/>
</dbReference>
<dbReference type="HOGENOM" id="CLU_044063_2_1_4"/>
<dbReference type="BioCyc" id="CTAI977880:RALTA_RS12820-MONOMER"/>
<dbReference type="UniPathway" id="UPA00053">
    <property type="reaction ID" value="UER00087"/>
</dbReference>
<dbReference type="Proteomes" id="UP000001692">
    <property type="component" value="Chromosome 1"/>
</dbReference>
<dbReference type="GO" id="GO:0005829">
    <property type="term" value="C:cytosol"/>
    <property type="evidence" value="ECO:0007669"/>
    <property type="project" value="TreeGrafter"/>
</dbReference>
<dbReference type="GO" id="GO:0050661">
    <property type="term" value="F:NADP binding"/>
    <property type="evidence" value="ECO:0007669"/>
    <property type="project" value="InterPro"/>
</dbReference>
<dbReference type="GO" id="GO:0004764">
    <property type="term" value="F:shikimate 3-dehydrogenase (NADP+) activity"/>
    <property type="evidence" value="ECO:0007669"/>
    <property type="project" value="UniProtKB-UniRule"/>
</dbReference>
<dbReference type="GO" id="GO:0008652">
    <property type="term" value="P:amino acid biosynthetic process"/>
    <property type="evidence" value="ECO:0007669"/>
    <property type="project" value="UniProtKB-KW"/>
</dbReference>
<dbReference type="GO" id="GO:0009073">
    <property type="term" value="P:aromatic amino acid family biosynthetic process"/>
    <property type="evidence" value="ECO:0007669"/>
    <property type="project" value="UniProtKB-KW"/>
</dbReference>
<dbReference type="GO" id="GO:0009423">
    <property type="term" value="P:chorismate biosynthetic process"/>
    <property type="evidence" value="ECO:0007669"/>
    <property type="project" value="UniProtKB-UniRule"/>
</dbReference>
<dbReference type="GO" id="GO:0019632">
    <property type="term" value="P:shikimate metabolic process"/>
    <property type="evidence" value="ECO:0007669"/>
    <property type="project" value="InterPro"/>
</dbReference>
<dbReference type="CDD" id="cd01065">
    <property type="entry name" value="NAD_bind_Shikimate_DH"/>
    <property type="match status" value="1"/>
</dbReference>
<dbReference type="FunFam" id="3.40.50.10860:FF:000006">
    <property type="entry name" value="Shikimate dehydrogenase (NADP(+))"/>
    <property type="match status" value="1"/>
</dbReference>
<dbReference type="Gene3D" id="3.40.50.10860">
    <property type="entry name" value="Leucine Dehydrogenase, chain A, domain 1"/>
    <property type="match status" value="1"/>
</dbReference>
<dbReference type="Gene3D" id="3.40.50.720">
    <property type="entry name" value="NAD(P)-binding Rossmann-like Domain"/>
    <property type="match status" value="1"/>
</dbReference>
<dbReference type="HAMAP" id="MF_00222">
    <property type="entry name" value="Shikimate_DH_AroE"/>
    <property type="match status" value="1"/>
</dbReference>
<dbReference type="InterPro" id="IPR046346">
    <property type="entry name" value="Aminoacid_DH-like_N_sf"/>
</dbReference>
<dbReference type="InterPro" id="IPR036291">
    <property type="entry name" value="NAD(P)-bd_dom_sf"/>
</dbReference>
<dbReference type="InterPro" id="IPR041121">
    <property type="entry name" value="SDH_C"/>
</dbReference>
<dbReference type="InterPro" id="IPR011342">
    <property type="entry name" value="Shikimate_DH"/>
</dbReference>
<dbReference type="InterPro" id="IPR013708">
    <property type="entry name" value="Shikimate_DH-bd_N"/>
</dbReference>
<dbReference type="InterPro" id="IPR022893">
    <property type="entry name" value="Shikimate_DH_fam"/>
</dbReference>
<dbReference type="InterPro" id="IPR006151">
    <property type="entry name" value="Shikm_DH/Glu-tRNA_Rdtase"/>
</dbReference>
<dbReference type="NCBIfam" id="TIGR00507">
    <property type="entry name" value="aroE"/>
    <property type="match status" value="1"/>
</dbReference>
<dbReference type="NCBIfam" id="NF001310">
    <property type="entry name" value="PRK00258.1-2"/>
    <property type="match status" value="1"/>
</dbReference>
<dbReference type="PANTHER" id="PTHR21089:SF1">
    <property type="entry name" value="BIFUNCTIONAL 3-DEHYDROQUINATE DEHYDRATASE_SHIKIMATE DEHYDROGENASE, CHLOROPLASTIC"/>
    <property type="match status" value="1"/>
</dbReference>
<dbReference type="PANTHER" id="PTHR21089">
    <property type="entry name" value="SHIKIMATE DEHYDROGENASE"/>
    <property type="match status" value="1"/>
</dbReference>
<dbReference type="Pfam" id="PF18317">
    <property type="entry name" value="SDH_C"/>
    <property type="match status" value="1"/>
</dbReference>
<dbReference type="Pfam" id="PF01488">
    <property type="entry name" value="Shikimate_DH"/>
    <property type="match status" value="1"/>
</dbReference>
<dbReference type="Pfam" id="PF08501">
    <property type="entry name" value="Shikimate_dh_N"/>
    <property type="match status" value="1"/>
</dbReference>
<dbReference type="SUPFAM" id="SSF53223">
    <property type="entry name" value="Aminoacid dehydrogenase-like, N-terminal domain"/>
    <property type="match status" value="1"/>
</dbReference>
<dbReference type="SUPFAM" id="SSF51735">
    <property type="entry name" value="NAD(P)-binding Rossmann-fold domains"/>
    <property type="match status" value="1"/>
</dbReference>
<evidence type="ECO:0000255" key="1">
    <source>
        <dbReference type="HAMAP-Rule" id="MF_00222"/>
    </source>
</evidence>
<accession>B3R6S4</accession>
<proteinExistence type="inferred from homology"/>
<name>AROE_CUPTR</name>